<sequence length="433" mass="48971">MADTSPRESKLNKQDQDLHLEIDETGLACKSEVKKRWLGARGTAGLYGNGKYYYEVTITSKGLCRVGWATLGGSLNIGKGLDSFGYGGTGMKSTHKKFDDYGLPFTLNDVIGCYLDLDSRTIWWSKNGEQFPAAFSIDVKYKNSNTCLFPAVLCQNSSLSVNFGSQPFKFPPGNQFTAVSDAPNENVNWWSYEEQNSFEHVVVKLPFAVEEDVHNEFRMHTKLMLTELKRTQCKQDKDGSIRRTLQPISKTICAFLNTDGGRLFLGVNDDKVIKGISMSKNMIYHFFGSLRHMCENFKPCSPLCRIKVSILEVIPVGVIKVKLRKADLLKEEAHDFPKLACHSVGGSFCDCFLEINKAPTKQYLLIIQVSPPNPNSRTTIFQNEEGLVYRRRMASNKCVYLDDLRRMMNEKNQVFVDLPDEARAEIDSFSKFD</sequence>
<keyword id="KW-0963">Cytoplasm</keyword>
<keyword id="KW-0255">Endonuclease</keyword>
<keyword id="KW-0378">Hydrolase</keyword>
<keyword id="KW-0496">Mitochondrion</keyword>
<keyword id="KW-0540">Nuclease</keyword>
<keyword id="KW-1185">Reference proteome</keyword>
<protein>
    <recommendedName>
        <fullName evidence="5">Schlafen-like protein 2</fullName>
        <shortName evidence="5">SLFL-2</shortName>
        <shortName evidence="5">SLFN-like 2</shortName>
        <ecNumber evidence="4">3.1.-.-</ecNumber>
    </recommendedName>
    <alternativeName>
        <fullName evidence="8">21U-RNA biogenesis fouled up protein 2</fullName>
    </alternativeName>
    <alternativeName>
        <fullName evidence="6">PUCH complex member slfl-2</fullName>
    </alternativeName>
    <alternativeName>
        <fullName>Protein tofu-2</fullName>
    </alternativeName>
</protein>
<gene>
    <name evidence="8" type="primary">tofu-2</name>
    <name evidence="8" type="ORF">F20A1.9</name>
</gene>
<accession>Q19614</accession>
<proteinExistence type="evidence at protein level"/>
<dbReference type="EC" id="3.1.-.-" evidence="4"/>
<dbReference type="EMBL" id="BX284605">
    <property type="protein sequence ID" value="CCD66547.1"/>
    <property type="molecule type" value="Genomic_DNA"/>
</dbReference>
<dbReference type="PIR" id="T30040">
    <property type="entry name" value="T30040"/>
</dbReference>
<dbReference type="RefSeq" id="NP_504786.2">
    <property type="nucleotide sequence ID" value="NM_072385.7"/>
</dbReference>
<dbReference type="SMR" id="Q19614"/>
<dbReference type="ComplexPortal" id="CPX-8565">
    <property type="entry name" value="PUCH ribonuclease complex, slfl-3 variant"/>
</dbReference>
<dbReference type="ComplexPortal" id="CPX-8569">
    <property type="entry name" value="PUCH ribonuclease complex, slfl-4 variant"/>
</dbReference>
<dbReference type="FunCoup" id="Q19614">
    <property type="interactions" value="81"/>
</dbReference>
<dbReference type="STRING" id="6239.F20A1.9.1"/>
<dbReference type="PaxDb" id="6239-F20A1.9"/>
<dbReference type="PeptideAtlas" id="Q19614"/>
<dbReference type="EnsemblMetazoa" id="F20A1.9.1">
    <property type="protein sequence ID" value="F20A1.9.1"/>
    <property type="gene ID" value="WBGene00017620"/>
</dbReference>
<dbReference type="GeneID" id="179089"/>
<dbReference type="KEGG" id="cel:CELE_F20A1.9"/>
<dbReference type="UCSC" id="F20A1.9">
    <property type="organism name" value="c. elegans"/>
</dbReference>
<dbReference type="AGR" id="WB:WBGene00017620"/>
<dbReference type="CTD" id="179089"/>
<dbReference type="WormBase" id="F20A1.9">
    <property type="protein sequence ID" value="CE35281"/>
    <property type="gene ID" value="WBGene00017620"/>
    <property type="gene designation" value="tofu-2"/>
</dbReference>
<dbReference type="eggNOG" id="KOG0349">
    <property type="taxonomic scope" value="Eukaryota"/>
</dbReference>
<dbReference type="GeneTree" id="ENSGT00940000167826"/>
<dbReference type="HOGENOM" id="CLU_633455_0_0_1"/>
<dbReference type="InParanoid" id="Q19614"/>
<dbReference type="OrthoDB" id="10259112at2759"/>
<dbReference type="PhylomeDB" id="Q19614"/>
<dbReference type="Reactome" id="R-CEL-72163">
    <property type="pathway name" value="mRNA Splicing - Major Pathway"/>
</dbReference>
<dbReference type="Reactome" id="R-CEL-72203">
    <property type="pathway name" value="Processing of Capped Intron-Containing Pre-mRNA"/>
</dbReference>
<dbReference type="PRO" id="PR:Q19614"/>
<dbReference type="Proteomes" id="UP000001940">
    <property type="component" value="Chromosome V"/>
</dbReference>
<dbReference type="Bgee" id="WBGene00017620">
    <property type="expression patterns" value="Expressed in germ line (C elegans) and 3 other cell types or tissues"/>
</dbReference>
<dbReference type="GO" id="GO:0005737">
    <property type="term" value="C:cytoplasm"/>
    <property type="evidence" value="ECO:0000314"/>
    <property type="project" value="UniProtKB"/>
</dbReference>
<dbReference type="GO" id="GO:1902555">
    <property type="term" value="C:endoribonuclease complex"/>
    <property type="evidence" value="ECO:0000314"/>
    <property type="project" value="UniProtKB"/>
</dbReference>
<dbReference type="GO" id="GO:0005739">
    <property type="term" value="C:mitochondrion"/>
    <property type="evidence" value="ECO:0007669"/>
    <property type="project" value="UniProtKB-SubCell"/>
</dbReference>
<dbReference type="GO" id="GO:0005634">
    <property type="term" value="C:nucleus"/>
    <property type="evidence" value="ECO:0000318"/>
    <property type="project" value="GO_Central"/>
</dbReference>
<dbReference type="GO" id="GO:0003723">
    <property type="term" value="F:RNA binding"/>
    <property type="evidence" value="ECO:0000318"/>
    <property type="project" value="GO_Central"/>
</dbReference>
<dbReference type="GO" id="GO:0004521">
    <property type="term" value="F:RNA endonuclease activity"/>
    <property type="evidence" value="ECO:0000314"/>
    <property type="project" value="UniProtKB"/>
</dbReference>
<dbReference type="GO" id="GO:0000380">
    <property type="term" value="P:alternative mRNA splicing, via spliceosome"/>
    <property type="evidence" value="ECO:0000318"/>
    <property type="project" value="GO_Central"/>
</dbReference>
<dbReference type="GO" id="GO:0140990">
    <property type="term" value="P:primary piRNA processing"/>
    <property type="evidence" value="ECO:0000314"/>
    <property type="project" value="UniProtKB"/>
</dbReference>
<dbReference type="CDD" id="cd12873">
    <property type="entry name" value="SPRY_DDX1"/>
    <property type="match status" value="1"/>
</dbReference>
<dbReference type="Gene3D" id="2.60.120.920">
    <property type="match status" value="1"/>
</dbReference>
<dbReference type="Gene3D" id="3.30.950.30">
    <property type="entry name" value="Schlafen, AAA domain"/>
    <property type="match status" value="1"/>
</dbReference>
<dbReference type="InterPro" id="IPR001870">
    <property type="entry name" value="B30.2/SPRY"/>
</dbReference>
<dbReference type="InterPro" id="IPR043136">
    <property type="entry name" value="B30.2/SPRY_sf"/>
</dbReference>
<dbReference type="InterPro" id="IPR013320">
    <property type="entry name" value="ConA-like_dom_sf"/>
</dbReference>
<dbReference type="InterPro" id="IPR007421">
    <property type="entry name" value="Schlafen_AlbA_2_dom"/>
</dbReference>
<dbReference type="InterPro" id="IPR038461">
    <property type="entry name" value="Schlafen_AlbA_2_dom_sf"/>
</dbReference>
<dbReference type="InterPro" id="IPR003877">
    <property type="entry name" value="SPRY_dom"/>
</dbReference>
<dbReference type="PANTHER" id="PTHR12381:SF56">
    <property type="entry name" value="B30.2_SPRY DOMAIN-CONTAINING PROTEIN-RELATED"/>
    <property type="match status" value="1"/>
</dbReference>
<dbReference type="PANTHER" id="PTHR12381">
    <property type="entry name" value="HETEROGENEOUS NUCLEAR RIBONUCLEOPROTEIN U FAMILY MEMBER"/>
    <property type="match status" value="1"/>
</dbReference>
<dbReference type="Pfam" id="PF04326">
    <property type="entry name" value="SLFN_AlbA_2"/>
    <property type="match status" value="1"/>
</dbReference>
<dbReference type="Pfam" id="PF00622">
    <property type="entry name" value="SPRY"/>
    <property type="match status" value="1"/>
</dbReference>
<dbReference type="SMART" id="SM00449">
    <property type="entry name" value="SPRY"/>
    <property type="match status" value="1"/>
</dbReference>
<dbReference type="SUPFAM" id="SSF49899">
    <property type="entry name" value="Concanavalin A-like lectins/glucanases"/>
    <property type="match status" value="1"/>
</dbReference>
<dbReference type="PROSITE" id="PS50188">
    <property type="entry name" value="B302_SPRY"/>
    <property type="match status" value="1"/>
</dbReference>
<reference evidence="7" key="1">
    <citation type="journal article" date="1998" name="Science">
        <title>Genome sequence of the nematode C. elegans: a platform for investigating biology.</title>
        <authorList>
            <consortium name="The C. elegans sequencing consortium"/>
        </authorList>
    </citation>
    <scope>NUCLEOTIDE SEQUENCE [LARGE SCALE GENOMIC DNA]</scope>
    <source>
        <strain evidence="7">Bristol N2</strain>
    </source>
</reference>
<reference evidence="6" key="2">
    <citation type="journal article" date="2019" name="Cell Rep.">
        <title>Functional Proteomics Identifies a PICS Complex Required for piRNA Maturation and Chromosome Segregation.</title>
        <authorList>
            <person name="Zeng C."/>
            <person name="Weng C."/>
            <person name="Wang X."/>
            <person name="Yan Y.H."/>
            <person name="Li W.J."/>
            <person name="Xu D."/>
            <person name="Hong M."/>
            <person name="Liao S."/>
            <person name="Dong M.Q."/>
            <person name="Feng X."/>
            <person name="Xu C."/>
            <person name="Guang S."/>
        </authorList>
    </citation>
    <scope>SUBCELLULAR LOCATION</scope>
    <scope>TISSUE SPECIFICITY</scope>
</reference>
<reference key="3">
    <citation type="journal article" date="2023" name="Nature">
        <title>piRNA processing by a trimeric Schlafen-domain nuclease.</title>
        <authorList>
            <person name="Podvalnaya N."/>
            <person name="Bronkhorst A.W."/>
            <person name="Lichtenberger R."/>
            <person name="Hellmann S."/>
            <person name="Nischwitz E."/>
            <person name="Falk T."/>
            <person name="Karaulanov E."/>
            <person name="Butter F."/>
            <person name="Falk S."/>
            <person name="Ketting R.F."/>
        </authorList>
    </citation>
    <scope>FUNCTION</scope>
    <scope>CATALYTIC ACTIVITY</scope>
    <scope>COFACTOR</scope>
    <scope>ACTIVITY REGULATION</scope>
    <scope>IDENTIFICATION IN THE PUCH COMPLEX</scope>
    <scope>INTERACTION WITH TOFU-1 AND SLFL-3</scope>
    <scope>SUBCELLULAR LOCATION</scope>
    <scope>DOMAIN</scope>
    <scope>MUTAGENESIS OF GLU-216</scope>
</reference>
<evidence type="ECO:0000250" key="1">
    <source>
        <dbReference type="UniProtKB" id="Q5U311"/>
    </source>
</evidence>
<evidence type="ECO:0000255" key="2">
    <source>
        <dbReference type="PROSITE-ProRule" id="PRU00548"/>
    </source>
</evidence>
<evidence type="ECO:0000269" key="3">
    <source>
    </source>
</evidence>
<evidence type="ECO:0000269" key="4">
    <source>
    </source>
</evidence>
<evidence type="ECO:0000303" key="5">
    <source>
    </source>
</evidence>
<evidence type="ECO:0000305" key="6"/>
<evidence type="ECO:0000312" key="7">
    <source>
        <dbReference type="Proteomes" id="UP000001940"/>
    </source>
</evidence>
<evidence type="ECO:0000312" key="8">
    <source>
        <dbReference type="WormBase" id="F20A1.9"/>
    </source>
</evidence>
<name>SLFL2_CAEEL</name>
<feature type="chain" id="PRO_0000452468" description="Schlafen-like protein 2">
    <location>
        <begin position="1"/>
        <end position="433"/>
    </location>
</feature>
<feature type="domain" description="B30.2/SPRY" evidence="2">
    <location>
        <begin position="1"/>
        <end position="168"/>
    </location>
</feature>
<feature type="region of interest" description="SLFN-like fold" evidence="5">
    <location>
        <begin position="199"/>
        <end position="400"/>
    </location>
</feature>
<feature type="active site" evidence="1">
    <location>
        <position position="211"/>
    </location>
</feature>
<feature type="active site" evidence="1">
    <location>
        <position position="216"/>
    </location>
</feature>
<feature type="mutagenesis site" description="Loss of piRNA precursor processing. Loss of mature piRNAs and accumulation of precursor piRNAs. Does not affect interaction with tofu-1. Reduced piRNA precursor accumulation but absence of mature piRNAs; when associated with 'C-61' in pid-1." evidence="4">
    <original>E</original>
    <variation>A</variation>
    <location>
        <position position="216"/>
    </location>
</feature>
<comment type="function">
    <text evidence="4">Component of the trimeric PUCH (precursor of 21U RNA 5'-end cleavage holoenzyme) complex, that acts as an endoribonuclease processing the 5'-end of precursor Piwi-interacting RNAs (piRNAs) (PubMed:37758951). The PUCH complex consists of tofu-1, tofu-2 and either slfl-3 or slfl-4, with tofu-2 exhibiting endoribonuclease activity (PubMed:37758951). PUCH-mediated processing strictly requires a 7-methyl-G cap (m7 G-cap) and an uracil at position three (U3) (PubMed:37758951). PUCH also exhibits a strict bias for piRNA precursors with an A or G at position 1 (PubMed:37758951). Mature piRNA production is enhanced by the interaction of PUCH with the PETISCO complex, which is stabilizing piRNA precursors and allows their processing by PUCH (PubMed:37758951).</text>
</comment>
<comment type="cofactor">
    <cofactor evidence="4">
        <name>Mg(2+)</name>
        <dbReference type="ChEBI" id="CHEBI:18420"/>
    </cofactor>
    <text evidence="4">Can also use Mn(2+) or Ca(2+), but not Zn(2+).</text>
</comment>
<comment type="activity regulation">
    <text evidence="4">Inhibited by ethylenediaminetetraacetic acid (EDTA).</text>
</comment>
<comment type="subunit">
    <text evidence="4">Component of the trimeric PUCH (precursor of 21U RNA 5'-end cleavage holoenzyme) complex; consisting of tofu-1, tofu-2 and either slfl-3 or slfl-4 (PubMed:37758951). Within the complex, interacts (via N-terminus) with tofu-1 (via N-terminus); the interaction stabilizes tofu-2 and may form a functional nuclease (PubMed:37758951). Within the complex, interacts (via N-terminus) with slfl-3 (via N-terminus); the presence of tofu-1 is required for this interaction (PubMed:37758951).</text>
</comment>
<comment type="subcellular location">
    <subcellularLocation>
        <location evidence="3">Cytoplasm</location>
    </subcellularLocation>
    <subcellularLocation>
        <location evidence="4">Mitochondrion</location>
    </subcellularLocation>
    <text evidence="4">The localization to the mitochondrion is mediated by slfl-3.</text>
</comment>
<comment type="tissue specificity">
    <text evidence="3">Expressed in the germline.</text>
</comment>
<comment type="domain">
    <text evidence="5">In mammalian Schlafen proteins, two SLFN-folds come together to form the nuclease domain. In tofu-1 and tofu-2, only one SLFN-like fold can be identified, suggesting that the two proteins may interact via their SLFN-like folds to form a functional nuclease.</text>
</comment>
<comment type="similarity">
    <text evidence="6">Belongs to the Schlafen family.</text>
</comment>
<organism evidence="7">
    <name type="scientific">Caenorhabditis elegans</name>
    <dbReference type="NCBI Taxonomy" id="6239"/>
    <lineage>
        <taxon>Eukaryota</taxon>
        <taxon>Metazoa</taxon>
        <taxon>Ecdysozoa</taxon>
        <taxon>Nematoda</taxon>
        <taxon>Chromadorea</taxon>
        <taxon>Rhabditida</taxon>
        <taxon>Rhabditina</taxon>
        <taxon>Rhabditomorpha</taxon>
        <taxon>Rhabditoidea</taxon>
        <taxon>Rhabditidae</taxon>
        <taxon>Peloderinae</taxon>
        <taxon>Caenorhabditis</taxon>
    </lineage>
</organism>